<evidence type="ECO:0000255" key="1">
    <source>
        <dbReference type="HAMAP-Rule" id="MF_00555"/>
    </source>
</evidence>
<dbReference type="EC" id="6.3.1.1" evidence="1"/>
<dbReference type="EMBL" id="BX936398">
    <property type="protein sequence ID" value="CAH19243.1"/>
    <property type="molecule type" value="Genomic_DNA"/>
</dbReference>
<dbReference type="RefSeq" id="WP_002212256.1">
    <property type="nucleotide sequence ID" value="NZ_CP009712.1"/>
</dbReference>
<dbReference type="SMR" id="Q66GH8"/>
<dbReference type="GeneID" id="57974591"/>
<dbReference type="KEGG" id="ypo:BZ17_2596"/>
<dbReference type="KEGG" id="yps:YPTB0003"/>
<dbReference type="PATRIC" id="fig|273123.14.peg.2722"/>
<dbReference type="UniPathway" id="UPA00134">
    <property type="reaction ID" value="UER00194"/>
</dbReference>
<dbReference type="Proteomes" id="UP000001011">
    <property type="component" value="Chromosome"/>
</dbReference>
<dbReference type="GO" id="GO:0005829">
    <property type="term" value="C:cytosol"/>
    <property type="evidence" value="ECO:0007669"/>
    <property type="project" value="TreeGrafter"/>
</dbReference>
<dbReference type="GO" id="GO:0004071">
    <property type="term" value="F:aspartate-ammonia ligase activity"/>
    <property type="evidence" value="ECO:0007669"/>
    <property type="project" value="UniProtKB-UniRule"/>
</dbReference>
<dbReference type="GO" id="GO:0005524">
    <property type="term" value="F:ATP binding"/>
    <property type="evidence" value="ECO:0007669"/>
    <property type="project" value="UniProtKB-UniRule"/>
</dbReference>
<dbReference type="GO" id="GO:0070981">
    <property type="term" value="P:L-asparagine biosynthetic process"/>
    <property type="evidence" value="ECO:0007669"/>
    <property type="project" value="UniProtKB-UniRule"/>
</dbReference>
<dbReference type="Gene3D" id="3.30.930.10">
    <property type="entry name" value="Bira Bifunctional Protein, Domain 2"/>
    <property type="match status" value="1"/>
</dbReference>
<dbReference type="HAMAP" id="MF_00555">
    <property type="entry name" value="AsnA"/>
    <property type="match status" value="1"/>
</dbReference>
<dbReference type="InterPro" id="IPR006195">
    <property type="entry name" value="aa-tRNA-synth_II"/>
</dbReference>
<dbReference type="InterPro" id="IPR045864">
    <property type="entry name" value="aa-tRNA-synth_II/BPL/LPL"/>
</dbReference>
<dbReference type="InterPro" id="IPR004618">
    <property type="entry name" value="AsnA"/>
</dbReference>
<dbReference type="NCBIfam" id="TIGR00669">
    <property type="entry name" value="asnA"/>
    <property type="match status" value="1"/>
</dbReference>
<dbReference type="PANTHER" id="PTHR30073">
    <property type="entry name" value="ASPARTATE--AMMONIA LIGASE"/>
    <property type="match status" value="1"/>
</dbReference>
<dbReference type="PANTHER" id="PTHR30073:SF5">
    <property type="entry name" value="ASPARTATE--AMMONIA LIGASE"/>
    <property type="match status" value="1"/>
</dbReference>
<dbReference type="Pfam" id="PF03590">
    <property type="entry name" value="AsnA"/>
    <property type="match status" value="1"/>
</dbReference>
<dbReference type="PIRSF" id="PIRSF001555">
    <property type="entry name" value="Asp_ammon_ligase"/>
    <property type="match status" value="1"/>
</dbReference>
<dbReference type="SUPFAM" id="SSF55681">
    <property type="entry name" value="Class II aaRS and biotin synthetases"/>
    <property type="match status" value="1"/>
</dbReference>
<dbReference type="PROSITE" id="PS50862">
    <property type="entry name" value="AA_TRNA_LIGASE_II"/>
    <property type="match status" value="1"/>
</dbReference>
<protein>
    <recommendedName>
        <fullName evidence="1">Aspartate--ammonia ligase</fullName>
        <ecNumber evidence="1">6.3.1.1</ecNumber>
    </recommendedName>
    <alternativeName>
        <fullName evidence="1">Asparagine synthetase A</fullName>
    </alternativeName>
</protein>
<reference key="1">
    <citation type="journal article" date="2004" name="Proc. Natl. Acad. Sci. U.S.A.">
        <title>Insights into the evolution of Yersinia pestis through whole-genome comparison with Yersinia pseudotuberculosis.</title>
        <authorList>
            <person name="Chain P.S.G."/>
            <person name="Carniel E."/>
            <person name="Larimer F.W."/>
            <person name="Lamerdin J."/>
            <person name="Stoutland P.O."/>
            <person name="Regala W.M."/>
            <person name="Georgescu A.M."/>
            <person name="Vergez L.M."/>
            <person name="Land M.L."/>
            <person name="Motin V.L."/>
            <person name="Brubaker R.R."/>
            <person name="Fowler J."/>
            <person name="Hinnebusch J."/>
            <person name="Marceau M."/>
            <person name="Medigue C."/>
            <person name="Simonet M."/>
            <person name="Chenal-Francisque V."/>
            <person name="Souza B."/>
            <person name="Dacheux D."/>
            <person name="Elliott J.M."/>
            <person name="Derbise A."/>
            <person name="Hauser L.J."/>
            <person name="Garcia E."/>
        </authorList>
    </citation>
    <scope>NUCLEOTIDE SEQUENCE [LARGE SCALE GENOMIC DNA]</scope>
    <source>
        <strain>IP32953</strain>
    </source>
</reference>
<organism>
    <name type="scientific">Yersinia pseudotuberculosis serotype I (strain IP32953)</name>
    <dbReference type="NCBI Taxonomy" id="273123"/>
    <lineage>
        <taxon>Bacteria</taxon>
        <taxon>Pseudomonadati</taxon>
        <taxon>Pseudomonadota</taxon>
        <taxon>Gammaproteobacteria</taxon>
        <taxon>Enterobacterales</taxon>
        <taxon>Yersiniaceae</taxon>
        <taxon>Yersinia</taxon>
    </lineage>
</organism>
<accession>Q66GH8</accession>
<name>ASNA_YERPS</name>
<feature type="chain" id="PRO_1000017978" description="Aspartate--ammonia ligase">
    <location>
        <begin position="1"/>
        <end position="330"/>
    </location>
</feature>
<proteinExistence type="inferred from homology"/>
<keyword id="KW-0028">Amino-acid biosynthesis</keyword>
<keyword id="KW-0061">Asparagine biosynthesis</keyword>
<keyword id="KW-0067">ATP-binding</keyword>
<keyword id="KW-0963">Cytoplasm</keyword>
<keyword id="KW-0436">Ligase</keyword>
<keyword id="KW-0547">Nucleotide-binding</keyword>
<comment type="catalytic activity">
    <reaction evidence="1">
        <text>L-aspartate + NH4(+) + ATP = L-asparagine + AMP + diphosphate + H(+)</text>
        <dbReference type="Rhea" id="RHEA:11372"/>
        <dbReference type="ChEBI" id="CHEBI:15378"/>
        <dbReference type="ChEBI" id="CHEBI:28938"/>
        <dbReference type="ChEBI" id="CHEBI:29991"/>
        <dbReference type="ChEBI" id="CHEBI:30616"/>
        <dbReference type="ChEBI" id="CHEBI:33019"/>
        <dbReference type="ChEBI" id="CHEBI:58048"/>
        <dbReference type="ChEBI" id="CHEBI:456215"/>
        <dbReference type="EC" id="6.3.1.1"/>
    </reaction>
</comment>
<comment type="pathway">
    <text evidence="1">Amino-acid biosynthesis; L-asparagine biosynthesis; L-asparagine from L-aspartate (ammonia route): step 1/1.</text>
</comment>
<comment type="subcellular location">
    <subcellularLocation>
        <location evidence="1">Cytoplasm</location>
    </subcellularLocation>
</comment>
<comment type="similarity">
    <text evidence="1">Belongs to the class-II aminoacyl-tRNA synthetase family. AsnA subfamily.</text>
</comment>
<gene>
    <name evidence="1" type="primary">asnA</name>
    <name type="ordered locus">YPTB0003</name>
</gene>
<sequence length="330" mass="36828">MKKQFIQKQQQISFVKSFFSRQLEQQLGLIEVQAPILSRVGDGTQDNLSGSEKAVQVKVKSLPDSTFEVVHSLAKWKRKTLGRFDFGADQGVYTHMKALRPDEDRLSAIHSVYVDQWDWERVMGDGERNLAYLKSTVNKIYAAIKETEAAISAEFGVKPFLPDHIQFIHSESLRARFPDLDAKGRERAIAKELGAVFLIGIGGKLADGQSHDVRAPDYDDWTSPSAEGFSGLNGDIIVWNPILEDAFEISSMGIRVDAEALKRQLALTGDEDRLELEWHQSLLRGEMPQTIGGGIGQSRLVMLLLQKQHIGQVQCGVWGPEISEKVDGLL</sequence>